<gene>
    <name type="primary">lytS</name>
    <name type="ordered locus">OB1642</name>
</gene>
<protein>
    <recommendedName>
        <fullName>Sensor protein LytS</fullName>
        <ecNumber>2.7.13.3</ecNumber>
    </recommendedName>
</protein>
<comment type="function">
    <text>Member of the two-component regulatory system LytS/LytT that probably regulates genes involved in cell wall metabolism.</text>
</comment>
<comment type="catalytic activity">
    <reaction>
        <text>ATP + protein L-histidine = ADP + protein N-phospho-L-histidine.</text>
        <dbReference type="EC" id="2.7.13.3"/>
    </reaction>
</comment>
<comment type="subcellular location">
    <subcellularLocation>
        <location evidence="3">Cell membrane</location>
        <topology evidence="3">Multi-pass membrane protein</topology>
    </subcellularLocation>
</comment>
<organism>
    <name type="scientific">Oceanobacillus iheyensis (strain DSM 14371 / CIP 107618 / JCM 11309 / KCTC 3954 / HTE831)</name>
    <dbReference type="NCBI Taxonomy" id="221109"/>
    <lineage>
        <taxon>Bacteria</taxon>
        <taxon>Bacillati</taxon>
        <taxon>Bacillota</taxon>
        <taxon>Bacilli</taxon>
        <taxon>Bacillales</taxon>
        <taxon>Bacillaceae</taxon>
        <taxon>Oceanobacillus</taxon>
    </lineage>
</organism>
<feature type="chain" id="PRO_0000074791" description="Sensor protein LytS">
    <location>
        <begin position="1"/>
        <end position="585"/>
    </location>
</feature>
<feature type="transmembrane region" description="Helical" evidence="2">
    <location>
        <begin position="6"/>
        <end position="28"/>
    </location>
</feature>
<feature type="transmembrane region" description="Helical" evidence="2">
    <location>
        <begin position="41"/>
        <end position="63"/>
    </location>
</feature>
<feature type="transmembrane region" description="Helical" evidence="2">
    <location>
        <begin position="82"/>
        <end position="104"/>
    </location>
</feature>
<feature type="transmembrane region" description="Helical" evidence="2">
    <location>
        <begin position="111"/>
        <end position="133"/>
    </location>
</feature>
<feature type="transmembrane region" description="Helical" evidence="2">
    <location>
        <begin position="153"/>
        <end position="172"/>
    </location>
</feature>
<feature type="transmembrane region" description="Helical" evidence="2">
    <location>
        <begin position="179"/>
        <end position="201"/>
    </location>
</feature>
<feature type="domain" description="Histidine kinase">
    <location>
        <begin position="362"/>
        <end position="580"/>
    </location>
</feature>
<feature type="modified residue" description="Phosphohistidine; by autocatalysis" evidence="1">
    <location>
        <position position="389"/>
    </location>
</feature>
<keyword id="KW-0067">ATP-binding</keyword>
<keyword id="KW-1003">Cell membrane</keyword>
<keyword id="KW-0418">Kinase</keyword>
<keyword id="KW-0472">Membrane</keyword>
<keyword id="KW-0547">Nucleotide-binding</keyword>
<keyword id="KW-0597">Phosphoprotein</keyword>
<keyword id="KW-1185">Reference proteome</keyword>
<keyword id="KW-0808">Transferase</keyword>
<keyword id="KW-0812">Transmembrane</keyword>
<keyword id="KW-1133">Transmembrane helix</keyword>
<keyword id="KW-0902">Two-component regulatory system</keyword>
<sequence length="585" mass="64669">MIELTIVLFQRIGLLLLMAFILTRIPRFRSLLDKDITLKTVIYHSLIFGLISIIGAHVGVVMIGNELIMQAWIINVAENEVLIGFSIVVVMIAGLLGGPFLGLGTGMVAGLYIIFLGGGGWVANSLINPLAGLLTGWAGQFFSDDRVMSPNKALFIGIFPPVLHMGLLLIMLPDQQIGVQIVNTIGIPLVVTNSIALTIFTMMIRLALNETEQEAALETNRALTIAEKALPLLSEEPGTMNARKMAKLLFKELDIAAISITNRTTVLSHVGLGDDHHQPGEPLKMRLSKKAVKDGRIQIAYHQSDIQCGVENCKLKTAIMVPIYRSGEVIGLINLYYRHSQQITAVEITLAKGLGTIISNQISGLEAEKMKKLLKEAKMRNLQAQINPHFLFNTFHLIHSLLRVDAEKARHILVQLSQFMRANLKIASESLVPLHKELEHLQAYLEIVQARFPDQISTSIHVDDYLLDIEIPPATLQPLVENSIQHGLSLSTSKGILTINITKTDNNVSIVLLDNGQGFEEKLLPILGKKPLHQNENKGNGIALYNINQRLISLLGEDSQLHIQNTDKGSMVQFILPYRNCKKIM</sequence>
<dbReference type="EC" id="2.7.13.3"/>
<dbReference type="EMBL" id="BA000028">
    <property type="protein sequence ID" value="BAC13598.1"/>
    <property type="molecule type" value="Genomic_DNA"/>
</dbReference>
<dbReference type="RefSeq" id="WP_011066042.1">
    <property type="nucleotide sequence ID" value="NC_004193.1"/>
</dbReference>
<dbReference type="SMR" id="Q8EQQ2"/>
<dbReference type="STRING" id="221109.gene:10733882"/>
<dbReference type="KEGG" id="oih:OB1642"/>
<dbReference type="eggNOG" id="COG3275">
    <property type="taxonomic scope" value="Bacteria"/>
</dbReference>
<dbReference type="HOGENOM" id="CLU_020473_3_3_9"/>
<dbReference type="OrthoDB" id="9776552at2"/>
<dbReference type="PhylomeDB" id="Q8EQQ2"/>
<dbReference type="Proteomes" id="UP000000822">
    <property type="component" value="Chromosome"/>
</dbReference>
<dbReference type="GO" id="GO:0005886">
    <property type="term" value="C:plasma membrane"/>
    <property type="evidence" value="ECO:0007669"/>
    <property type="project" value="UniProtKB-SubCell"/>
</dbReference>
<dbReference type="GO" id="GO:0005524">
    <property type="term" value="F:ATP binding"/>
    <property type="evidence" value="ECO:0007669"/>
    <property type="project" value="UniProtKB-KW"/>
</dbReference>
<dbReference type="GO" id="GO:0000155">
    <property type="term" value="F:phosphorelay sensor kinase activity"/>
    <property type="evidence" value="ECO:0007669"/>
    <property type="project" value="InterPro"/>
</dbReference>
<dbReference type="GO" id="GO:0071555">
    <property type="term" value="P:cell wall organization"/>
    <property type="evidence" value="ECO:0007669"/>
    <property type="project" value="InterPro"/>
</dbReference>
<dbReference type="CDD" id="cd16924">
    <property type="entry name" value="HATPase_YpdA-YehU-LytS-like"/>
    <property type="match status" value="1"/>
</dbReference>
<dbReference type="Gene3D" id="3.30.450.40">
    <property type="match status" value="1"/>
</dbReference>
<dbReference type="Gene3D" id="3.30.565.10">
    <property type="entry name" value="Histidine kinase-like ATPase, C-terminal domain"/>
    <property type="match status" value="1"/>
</dbReference>
<dbReference type="InterPro" id="IPR050640">
    <property type="entry name" value="Bact_2-comp_sensor_kinase"/>
</dbReference>
<dbReference type="InterPro" id="IPR029016">
    <property type="entry name" value="GAF-like_dom_sf"/>
</dbReference>
<dbReference type="InterPro" id="IPR036890">
    <property type="entry name" value="HATPase_C_sf"/>
</dbReference>
<dbReference type="InterPro" id="IPR010559">
    <property type="entry name" value="Sig_transdc_His_kin_internal"/>
</dbReference>
<dbReference type="InterPro" id="IPR011620">
    <property type="entry name" value="Sig_transdc_His_kinase_LytS_TM"/>
</dbReference>
<dbReference type="PANTHER" id="PTHR34220">
    <property type="entry name" value="SENSOR HISTIDINE KINASE YPDA"/>
    <property type="match status" value="1"/>
</dbReference>
<dbReference type="PANTHER" id="PTHR34220:SF7">
    <property type="entry name" value="SENSOR HISTIDINE KINASE YPDA"/>
    <property type="match status" value="1"/>
</dbReference>
<dbReference type="Pfam" id="PF07694">
    <property type="entry name" value="5TM-5TMR_LYT"/>
    <property type="match status" value="1"/>
</dbReference>
<dbReference type="Pfam" id="PF02518">
    <property type="entry name" value="HATPase_c"/>
    <property type="match status" value="1"/>
</dbReference>
<dbReference type="Pfam" id="PF06580">
    <property type="entry name" value="His_kinase"/>
    <property type="match status" value="1"/>
</dbReference>
<dbReference type="SUPFAM" id="SSF55874">
    <property type="entry name" value="ATPase domain of HSP90 chaperone/DNA topoisomerase II/histidine kinase"/>
    <property type="match status" value="1"/>
</dbReference>
<dbReference type="SUPFAM" id="SSF55781">
    <property type="entry name" value="GAF domain-like"/>
    <property type="match status" value="1"/>
</dbReference>
<name>LYTS_OCEIH</name>
<reference key="1">
    <citation type="journal article" date="2002" name="Nucleic Acids Res.">
        <title>Genome sequence of Oceanobacillus iheyensis isolated from the Iheya Ridge and its unexpected adaptive capabilities to extreme environments.</title>
        <authorList>
            <person name="Takami H."/>
            <person name="Takaki Y."/>
            <person name="Uchiyama I."/>
        </authorList>
    </citation>
    <scope>NUCLEOTIDE SEQUENCE [LARGE SCALE GENOMIC DNA]</scope>
    <source>
        <strain>DSM 14371 / CIP 107618 / JCM 11309 / KCTC 3954 / HTE831</strain>
    </source>
</reference>
<accession>Q8EQQ2</accession>
<evidence type="ECO:0000250" key="1"/>
<evidence type="ECO:0000255" key="2"/>
<evidence type="ECO:0000305" key="3"/>
<proteinExistence type="inferred from homology"/>